<sequence>MFEIHPVKKVSVVIPVYNEQESLPELIRRTTTACESLGKEYEILLIDDGSSDNSAHMLVEASQAENSHIVSILLNRNYGQHSAIMAGFSHVTGDLIITLDADLQNPPEEIPRLVAKADEGYDVVGTVRQNRQDSWFRKTASKMINRLIQRTTGKAMGDYGCMLRAYRRHIVDAMLHCHERSTFIPILANIFARRAIEIPVHHSEREFGESKYSFMRLINLMYDLVTCLTTTPLRMLSLLGSIIAIGGFSIAVLLVILRLTFGPQWAAEGVFMLFAVLFTFIGAQFIGMGLLGEYIGRIYTDVRARPRYFVQQVIRPSSKENE</sequence>
<evidence type="ECO:0000255" key="1">
    <source>
        <dbReference type="HAMAP-Rule" id="MF_01164"/>
    </source>
</evidence>
<reference key="1">
    <citation type="journal article" date="2008" name="J. Bacteriol.">
        <title>The pangenome structure of Escherichia coli: comparative genomic analysis of E. coli commensal and pathogenic isolates.</title>
        <authorList>
            <person name="Rasko D.A."/>
            <person name="Rosovitz M.J."/>
            <person name="Myers G.S.A."/>
            <person name="Mongodin E.F."/>
            <person name="Fricke W.F."/>
            <person name="Gajer P."/>
            <person name="Crabtree J."/>
            <person name="Sebaihia M."/>
            <person name="Thomson N.R."/>
            <person name="Chaudhuri R."/>
            <person name="Henderson I.R."/>
            <person name="Sperandio V."/>
            <person name="Ravel J."/>
        </authorList>
    </citation>
    <scope>NUCLEOTIDE SEQUENCE [LARGE SCALE GENOMIC DNA]</scope>
    <source>
        <strain>E24377A / ETEC</strain>
    </source>
</reference>
<organism>
    <name type="scientific">Escherichia coli O139:H28 (strain E24377A / ETEC)</name>
    <dbReference type="NCBI Taxonomy" id="331111"/>
    <lineage>
        <taxon>Bacteria</taxon>
        <taxon>Pseudomonadati</taxon>
        <taxon>Pseudomonadota</taxon>
        <taxon>Gammaproteobacteria</taxon>
        <taxon>Enterobacterales</taxon>
        <taxon>Enterobacteriaceae</taxon>
        <taxon>Escherichia</taxon>
    </lineage>
</organism>
<proteinExistence type="inferred from homology"/>
<accession>A7ZP72</accession>
<feature type="chain" id="PRO_1000065649" description="Undecaprenyl-phosphate 4-deoxy-4-formamido-L-arabinose transferase">
    <location>
        <begin position="1"/>
        <end position="322"/>
    </location>
</feature>
<feature type="topological domain" description="Cytoplasmic" evidence="1">
    <location>
        <begin position="1"/>
        <end position="235"/>
    </location>
</feature>
<feature type="transmembrane region" description="Helical" evidence="1">
    <location>
        <begin position="236"/>
        <end position="256"/>
    </location>
</feature>
<feature type="topological domain" description="Periplasmic" evidence="1">
    <location>
        <begin position="257"/>
        <end position="269"/>
    </location>
</feature>
<feature type="transmembrane region" description="Helical" evidence="1">
    <location>
        <begin position="270"/>
        <end position="290"/>
    </location>
</feature>
<feature type="topological domain" description="Cytoplasmic" evidence="1">
    <location>
        <begin position="291"/>
        <end position="322"/>
    </location>
</feature>
<protein>
    <recommendedName>
        <fullName evidence="1">Undecaprenyl-phosphate 4-deoxy-4-formamido-L-arabinose transferase</fullName>
        <ecNumber evidence="1">2.4.2.53</ecNumber>
    </recommendedName>
    <alternativeName>
        <fullName evidence="1">Undecaprenyl-phosphate Ara4FN transferase</fullName>
        <shortName evidence="1">Ara4FN transferase</shortName>
    </alternativeName>
</protein>
<keyword id="KW-0046">Antibiotic resistance</keyword>
<keyword id="KW-0997">Cell inner membrane</keyword>
<keyword id="KW-1003">Cell membrane</keyword>
<keyword id="KW-0328">Glycosyltransferase</keyword>
<keyword id="KW-0441">Lipid A biosynthesis</keyword>
<keyword id="KW-0444">Lipid biosynthesis</keyword>
<keyword id="KW-0443">Lipid metabolism</keyword>
<keyword id="KW-0448">Lipopolysaccharide biosynthesis</keyword>
<keyword id="KW-0472">Membrane</keyword>
<keyword id="KW-1185">Reference proteome</keyword>
<keyword id="KW-0808">Transferase</keyword>
<keyword id="KW-0812">Transmembrane</keyword>
<keyword id="KW-1133">Transmembrane helix</keyword>
<dbReference type="EC" id="2.4.2.53" evidence="1"/>
<dbReference type="EMBL" id="CP000800">
    <property type="protein sequence ID" value="ABV20286.1"/>
    <property type="molecule type" value="Genomic_DNA"/>
</dbReference>
<dbReference type="RefSeq" id="WP_000461661.1">
    <property type="nucleotide sequence ID" value="NC_009801.1"/>
</dbReference>
<dbReference type="SMR" id="A7ZP72"/>
<dbReference type="CAZy" id="GT2">
    <property type="family name" value="Glycosyltransferase Family 2"/>
</dbReference>
<dbReference type="KEGG" id="ecw:EcE24377A_2549"/>
<dbReference type="HOGENOM" id="CLU_033536_0_0_6"/>
<dbReference type="UniPathway" id="UPA00030"/>
<dbReference type="UniPathway" id="UPA00036">
    <property type="reaction ID" value="UER00495"/>
</dbReference>
<dbReference type="Proteomes" id="UP000001122">
    <property type="component" value="Chromosome"/>
</dbReference>
<dbReference type="GO" id="GO:0005886">
    <property type="term" value="C:plasma membrane"/>
    <property type="evidence" value="ECO:0007669"/>
    <property type="project" value="UniProtKB-SubCell"/>
</dbReference>
<dbReference type="GO" id="GO:0016780">
    <property type="term" value="F:phosphotransferase activity, for other substituted phosphate groups"/>
    <property type="evidence" value="ECO:0007669"/>
    <property type="project" value="UniProtKB-UniRule"/>
</dbReference>
<dbReference type="GO" id="GO:0099621">
    <property type="term" value="F:undecaprenyl-phosphate 4-deoxy-4-formamido-L-arabinose transferase activity"/>
    <property type="evidence" value="ECO:0007669"/>
    <property type="project" value="UniProtKB-EC"/>
</dbReference>
<dbReference type="GO" id="GO:0036108">
    <property type="term" value="P:4-amino-4-deoxy-alpha-L-arabinopyranosyl undecaprenyl phosphate biosynthetic process"/>
    <property type="evidence" value="ECO:0007669"/>
    <property type="project" value="UniProtKB-UniRule"/>
</dbReference>
<dbReference type="GO" id="GO:0009245">
    <property type="term" value="P:lipid A biosynthetic process"/>
    <property type="evidence" value="ECO:0007669"/>
    <property type="project" value="UniProtKB-UniRule"/>
</dbReference>
<dbReference type="GO" id="GO:0009103">
    <property type="term" value="P:lipopolysaccharide biosynthetic process"/>
    <property type="evidence" value="ECO:0007669"/>
    <property type="project" value="UniProtKB-UniRule"/>
</dbReference>
<dbReference type="GO" id="GO:0046677">
    <property type="term" value="P:response to antibiotic"/>
    <property type="evidence" value="ECO:0007669"/>
    <property type="project" value="UniProtKB-KW"/>
</dbReference>
<dbReference type="CDD" id="cd04187">
    <property type="entry name" value="DPM1_like_bac"/>
    <property type="match status" value="1"/>
</dbReference>
<dbReference type="FunFam" id="3.90.550.10:FF:000019">
    <property type="entry name" value="Undecaprenyl-phosphate 4-deoxy-4-formamido-L-arabinose transferase"/>
    <property type="match status" value="1"/>
</dbReference>
<dbReference type="Gene3D" id="3.90.550.10">
    <property type="entry name" value="Spore Coat Polysaccharide Biosynthesis Protein SpsA, Chain A"/>
    <property type="match status" value="1"/>
</dbReference>
<dbReference type="HAMAP" id="MF_01164">
    <property type="entry name" value="ArnC_transfer"/>
    <property type="match status" value="1"/>
</dbReference>
<dbReference type="InterPro" id="IPR022857">
    <property type="entry name" value="ArnC_tfrase"/>
</dbReference>
<dbReference type="InterPro" id="IPR001173">
    <property type="entry name" value="Glyco_trans_2-like"/>
</dbReference>
<dbReference type="InterPro" id="IPR050256">
    <property type="entry name" value="Glycosyltransferase_2"/>
</dbReference>
<dbReference type="InterPro" id="IPR029044">
    <property type="entry name" value="Nucleotide-diphossugar_trans"/>
</dbReference>
<dbReference type="NCBIfam" id="NF007986">
    <property type="entry name" value="PRK10714.1"/>
    <property type="match status" value="1"/>
</dbReference>
<dbReference type="PANTHER" id="PTHR48090:SF3">
    <property type="entry name" value="UNDECAPRENYL-PHOSPHATE 4-DEOXY-4-FORMAMIDO-L-ARABINOSE TRANSFERASE"/>
    <property type="match status" value="1"/>
</dbReference>
<dbReference type="PANTHER" id="PTHR48090">
    <property type="entry name" value="UNDECAPRENYL-PHOSPHATE 4-DEOXY-4-FORMAMIDO-L-ARABINOSE TRANSFERASE-RELATED"/>
    <property type="match status" value="1"/>
</dbReference>
<dbReference type="Pfam" id="PF00535">
    <property type="entry name" value="Glycos_transf_2"/>
    <property type="match status" value="1"/>
</dbReference>
<dbReference type="SUPFAM" id="SSF53448">
    <property type="entry name" value="Nucleotide-diphospho-sugar transferases"/>
    <property type="match status" value="1"/>
</dbReference>
<name>ARNC_ECO24</name>
<comment type="function">
    <text evidence="1">Catalyzes the transfer of 4-deoxy-4-formamido-L-arabinose from UDP to undecaprenyl phosphate. The modified arabinose is attached to lipid A and is required for resistance to polymyxin and cationic antimicrobial peptides.</text>
</comment>
<comment type="catalytic activity">
    <reaction evidence="1">
        <text>UDP-4-deoxy-4-formamido-beta-L-arabinose + di-trans,octa-cis-undecaprenyl phosphate = 4-deoxy-4-formamido-alpha-L-arabinopyranosyl di-trans,octa-cis-undecaprenyl phosphate + UDP</text>
        <dbReference type="Rhea" id="RHEA:27722"/>
        <dbReference type="ChEBI" id="CHEBI:58223"/>
        <dbReference type="ChEBI" id="CHEBI:58709"/>
        <dbReference type="ChEBI" id="CHEBI:58909"/>
        <dbReference type="ChEBI" id="CHEBI:60392"/>
        <dbReference type="EC" id="2.4.2.53"/>
    </reaction>
</comment>
<comment type="pathway">
    <text evidence="1">Glycolipid biosynthesis; 4-amino-4-deoxy-alpha-L-arabinose undecaprenyl phosphate biosynthesis; 4-amino-4-deoxy-alpha-L-arabinose undecaprenyl phosphate from UDP-4-deoxy-4-formamido-beta-L-arabinose and undecaprenyl phosphate: step 1/2.</text>
</comment>
<comment type="pathway">
    <text evidence="1">Bacterial outer membrane biogenesis; lipopolysaccharide biosynthesis.</text>
</comment>
<comment type="subcellular location">
    <subcellularLocation>
        <location evidence="1">Cell inner membrane</location>
        <topology evidence="1">Multi-pass membrane protein</topology>
    </subcellularLocation>
</comment>
<comment type="similarity">
    <text evidence="1">Belongs to the glycosyltransferase 2 family.</text>
</comment>
<gene>
    <name evidence="1" type="primary">arnC</name>
    <name type="ordered locus">EcE24377A_2549</name>
</gene>